<dbReference type="EC" id="2.3.2.27"/>
<dbReference type="EMBL" id="BX284601">
    <property type="protein sequence ID" value="CCD66417.1"/>
    <property type="molecule type" value="Genomic_DNA"/>
</dbReference>
<dbReference type="PIR" id="T25604">
    <property type="entry name" value="T25604"/>
</dbReference>
<dbReference type="RefSeq" id="NP_491231.2">
    <property type="nucleotide sequence ID" value="NM_058830.6"/>
</dbReference>
<dbReference type="SMR" id="P91133"/>
<dbReference type="BioGRID" id="37427">
    <property type="interactions" value="8"/>
</dbReference>
<dbReference type="FunCoup" id="P91133">
    <property type="interactions" value="2702"/>
</dbReference>
<dbReference type="IntAct" id="P91133">
    <property type="interactions" value="1"/>
</dbReference>
<dbReference type="STRING" id="6239.C32E8.11.1"/>
<dbReference type="PaxDb" id="6239-C32E8.11"/>
<dbReference type="PeptideAtlas" id="P91133"/>
<dbReference type="EnsemblMetazoa" id="C32E8.11.1">
    <property type="protein sequence ID" value="C32E8.11.1"/>
    <property type="gene ID" value="WBGene00016326"/>
</dbReference>
<dbReference type="GeneID" id="171953"/>
<dbReference type="KEGG" id="cel:CELE_C32E8.11"/>
<dbReference type="UCSC" id="C32E8.11">
    <property type="organism name" value="c. elegans"/>
</dbReference>
<dbReference type="AGR" id="WB:WBGene00016326"/>
<dbReference type="CTD" id="171953"/>
<dbReference type="WormBase" id="C32E8.11">
    <property type="protein sequence ID" value="CE40441"/>
    <property type="gene ID" value="WBGene00016326"/>
    <property type="gene designation" value="ubr-1"/>
</dbReference>
<dbReference type="eggNOG" id="KOG1140">
    <property type="taxonomic scope" value="Eukaryota"/>
</dbReference>
<dbReference type="GeneTree" id="ENSGT00950000183075"/>
<dbReference type="HOGENOM" id="CLU_001801_2_0_1"/>
<dbReference type="InParanoid" id="P91133"/>
<dbReference type="OMA" id="GEASYMC"/>
<dbReference type="OrthoDB" id="26387at2759"/>
<dbReference type="PhylomeDB" id="P91133"/>
<dbReference type="Reactome" id="R-CEL-983168">
    <property type="pathway name" value="Antigen processing: Ubiquitination &amp; Proteasome degradation"/>
</dbReference>
<dbReference type="UniPathway" id="UPA00143"/>
<dbReference type="PRO" id="PR:P91133"/>
<dbReference type="Proteomes" id="UP000001940">
    <property type="component" value="Chromosome I"/>
</dbReference>
<dbReference type="Bgee" id="WBGene00016326">
    <property type="expression patterns" value="Expressed in pharyngeal muscle cell (C elegans) and 4 other cell types or tissues"/>
</dbReference>
<dbReference type="GO" id="GO:0005737">
    <property type="term" value="C:cytoplasm"/>
    <property type="evidence" value="ECO:0000318"/>
    <property type="project" value="GO_Central"/>
</dbReference>
<dbReference type="GO" id="GO:0016020">
    <property type="term" value="C:membrane"/>
    <property type="evidence" value="ECO:0007669"/>
    <property type="project" value="UniProtKB-SubCell"/>
</dbReference>
<dbReference type="GO" id="GO:0000151">
    <property type="term" value="C:ubiquitin ligase complex"/>
    <property type="evidence" value="ECO:0000318"/>
    <property type="project" value="GO_Central"/>
</dbReference>
<dbReference type="GO" id="GO:0031624">
    <property type="term" value="F:ubiquitin conjugating enzyme binding"/>
    <property type="evidence" value="ECO:0000353"/>
    <property type="project" value="WormBase"/>
</dbReference>
<dbReference type="GO" id="GO:0061630">
    <property type="term" value="F:ubiquitin protein ligase activity"/>
    <property type="evidence" value="ECO:0000318"/>
    <property type="project" value="GO_Central"/>
</dbReference>
<dbReference type="GO" id="GO:0008270">
    <property type="term" value="F:zinc ion binding"/>
    <property type="evidence" value="ECO:0007669"/>
    <property type="project" value="UniProtKB-KW"/>
</dbReference>
<dbReference type="GO" id="GO:2000212">
    <property type="term" value="P:negative regulation of glutamate metabolic process"/>
    <property type="evidence" value="ECO:0000315"/>
    <property type="project" value="UniProtKB"/>
</dbReference>
<dbReference type="GO" id="GO:0016567">
    <property type="term" value="P:protein ubiquitination"/>
    <property type="evidence" value="ECO:0000318"/>
    <property type="project" value="GO_Central"/>
</dbReference>
<dbReference type="GO" id="GO:0043058">
    <property type="term" value="P:regulation of backward locomotion"/>
    <property type="evidence" value="ECO:0000315"/>
    <property type="project" value="UniProtKB"/>
</dbReference>
<dbReference type="GO" id="GO:0071596">
    <property type="term" value="P:ubiquitin-dependent protein catabolic process via the N-end rule pathway"/>
    <property type="evidence" value="ECO:0000318"/>
    <property type="project" value="GO_Central"/>
</dbReference>
<dbReference type="CDD" id="cd16482">
    <property type="entry name" value="RING-H2_UBR1-like"/>
    <property type="match status" value="1"/>
</dbReference>
<dbReference type="CDD" id="cd19672">
    <property type="entry name" value="UBR-box_UBR1_like"/>
    <property type="match status" value="1"/>
</dbReference>
<dbReference type="FunFam" id="3.30.1390.10:FF:000010">
    <property type="entry name" value="E3 ubiquitin-protein ligase ubr-1"/>
    <property type="match status" value="1"/>
</dbReference>
<dbReference type="FunFam" id="2.10.110.30:FF:000001">
    <property type="entry name" value="E3 ubiquitin-protein ligase UBR2 isoform 1"/>
    <property type="match status" value="1"/>
</dbReference>
<dbReference type="Gene3D" id="2.10.110.30">
    <property type="match status" value="1"/>
</dbReference>
<dbReference type="Gene3D" id="3.30.1390.10">
    <property type="match status" value="1"/>
</dbReference>
<dbReference type="InterPro" id="IPR003769">
    <property type="entry name" value="ClpS_core"/>
</dbReference>
<dbReference type="InterPro" id="IPR044046">
    <property type="entry name" value="E3_ligase_UBR-like_C"/>
</dbReference>
<dbReference type="InterPro" id="IPR014719">
    <property type="entry name" value="Ribosomal_bL12_C/ClpS-like"/>
</dbReference>
<dbReference type="InterPro" id="IPR039164">
    <property type="entry name" value="UBR1-like"/>
</dbReference>
<dbReference type="InterPro" id="IPR055194">
    <property type="entry name" value="UBR1-like_winged-helix"/>
</dbReference>
<dbReference type="InterPro" id="IPR003126">
    <property type="entry name" value="Znf_UBR"/>
</dbReference>
<dbReference type="PANTHER" id="PTHR21497:SF24">
    <property type="entry name" value="E3 UBIQUITIN-PROTEIN LIGASE UBR1"/>
    <property type="match status" value="1"/>
</dbReference>
<dbReference type="PANTHER" id="PTHR21497">
    <property type="entry name" value="UBIQUITIN LIGASE E3 ALPHA-RELATED"/>
    <property type="match status" value="1"/>
</dbReference>
<dbReference type="Pfam" id="PF02617">
    <property type="entry name" value="ClpS"/>
    <property type="match status" value="1"/>
</dbReference>
<dbReference type="Pfam" id="PF18995">
    <property type="entry name" value="PRT6_C"/>
    <property type="match status" value="1"/>
</dbReference>
<dbReference type="Pfam" id="PF22960">
    <property type="entry name" value="UBR1-like_wing"/>
    <property type="match status" value="1"/>
</dbReference>
<dbReference type="Pfam" id="PF02207">
    <property type="entry name" value="zf-UBR"/>
    <property type="match status" value="1"/>
</dbReference>
<dbReference type="SMART" id="SM00396">
    <property type="entry name" value="ZnF_UBR1"/>
    <property type="match status" value="1"/>
</dbReference>
<dbReference type="SUPFAM" id="SSF54736">
    <property type="entry name" value="ClpS-like"/>
    <property type="match status" value="1"/>
</dbReference>
<dbReference type="PROSITE" id="PS51157">
    <property type="entry name" value="ZF_UBR"/>
    <property type="match status" value="1"/>
</dbReference>
<gene>
    <name evidence="9" type="primary">ubr-1</name>
    <name evidence="9" type="ORF">C32E8.11</name>
</gene>
<sequence length="2058" mass="232816">MIVDLIQSARQGEWAQVRQLLLKHWLVQVPEVFEVNSDLPWDNTAANERILGSQGEILLAPLVSAFVLDVRNTKSTLEAMNGIAGVDPARRGQICGHVFKNGELTYTCLDCATDGTCVMCLQCFEVSIHKSHKYKMHSSSGSGYCDCGDADAWTEGYACANHEKKDDEEAAVLAPELKKRCEQLVEIILQFSLSMITHKDDLKLPEIFEKMKPEVTNEAQQYLTVLYNDETHTYESVIKVLELYIHCTKDQAMLVATIVDREGRSAVKLGSKADCTKAKDDVQRKTARDPTSIRRSSNHNLPLSVKVMDTTLFALQNFSISLLTWLNTQMDVFPPLREIVGEILLSSKFALKKNYTRKMKSEDQRLVAGIIRNVMVLPDDEEEELFALDGRMDVDEMDDDDIGGEALQMEIDADDEEEITAALAGVSEHQESPGPSRDSSTFTMLENILLQDTQMWKAGRSILHQMLMRTVFMIYDQKVRFAKAFMLHYNEIYEDFIKDDHEMDVSVVGLSVQFMTVPSLARKLVAEDQAFSVISKAIRDQTDKFVKYYNDGKIARFDFTSRSFPPELRRSLHITRDMAYILNAVPSESDWNRELIDGFVQGFADFLLFLQHLQGMDEVKRQAVEHQVWESEWETAFNILLRLKDAISMIIGWAETNEEVHNRLMIMCLELMNRMPPVYTKSEEDTYELTVTINGESCRISHFDVLKSSTSVHQPVVRIIAGLFSASNYTGFLLNRSNNSHTSLNQERIKELINCKDETNLYELSLRVLVLCAQSNATLWRRNGFSLINQIHNYFSPLCRNEMFDRDVLMMQVGAALTPSTKFIFHLLHRFRLFKWATSEFEQDKANEKPAKPESEDLSKTLVMIAEEFIQCLILILCERYTYGVGKTRPMDQMKREVIHILCTGSHTFSHIQQKMSHDINSKRLSLHEAVNLVADFRKPLATTAGQFHCKESSLPTYSPFFMHYSKSDQSAAEQSQARVRAKMEKSVRACAPPILPDFQTFFERIPEILTTNVLIHVVRLIIDRTARRSRFSSDRLFHKTLYLIGIALNEEEKNPSFGFTQRAEESIGLLSLLEGLVGKPESSICPILLEVTVEKYRKLIKARAGVPEAAPAPENKPAQSEEEIKAKRAARAAEMRQKAMAKMSNMQSKFMKKIEDEEKKDESQTPSEKSETVVKKDDYDNKHFFDEDVVKQVGHDFPVCIGANKWHAELVKPRTLTCILCQEDEIIAPQQGKPMVCAAFIQQSQLFTHKNKNGELMTASSGTISTRDLLTAPATLQYGVDVSTCSHSMHYECYRSLAEANRSRESLRARQVGQHSHKMVDTENGEYQCPLCKRLSNAAIPVLPAYQLTNQNGFSTVSGAGKENFDTWVARVKRNLEMPLSSESVSKKGHSRKRSHSERSLLDLEKLSKDPDTANTSAGVLQFGAMEMSSATHMPASAESQMLMTTSPSQDDVEFYNELAAMFVDQDVNNTTSPAATPETIPAIGSSSRIPESQESGKKPLSSQIQHVLYSLIRPFPALINSNRICSSSFEGFEEPIKDLGKNMMKFRKRGNELKTNFIEKHLKGYVISTVTWQSTAHVARAISSYLHYDKKPLFGALNTRQRDCLSAMARLCASLSHNMQFLLHAVSDMLRVFLCEPPRPKLAQTPGSPLLSAPSTSSFTPAPAQIPHSGTNFAFLVQLFNPAGPRKNVNLNILQIDILSLAISLMMTIGWTWNNGTQSMNSSSTHQKARLLTPDGSVDEAYVLRLSLLAHYFQIIATHSEADGNDVNMEEEQESQMEVDPVAAQTIRKLYALCHPFDGPLRRVDILWRKMEEGAQSLLRPIALLYHFITLVDPPEALKDPSINSSEPLFRYLGLPHKIEEQISGSMLEKLFTMWSSSIPSDQALRQDLVVQPVRPNLLVELPEKYSQLINQVATFKCPTIPIEESTSNVPTLCLVCGTILCSQAYCCQKIINKQSYGACRYHMSQCSGSVGMFLRVRDCSLVLMTTRKRGCFRPAPYVDEFGEVDQGFRRGNPLHLNPELYQKLKSLWLQQGITEEVVNYNEIDFRNVQYDWGHF</sequence>
<keyword id="KW-0472">Membrane</keyword>
<keyword id="KW-0479">Metal-binding</keyword>
<keyword id="KW-1185">Reference proteome</keyword>
<keyword id="KW-0808">Transferase</keyword>
<keyword id="KW-0812">Transmembrane</keyword>
<keyword id="KW-1133">Transmembrane helix</keyword>
<keyword id="KW-0833">Ubl conjugation pathway</keyword>
<keyword id="KW-0862">Zinc</keyword>
<keyword id="KW-0863">Zinc-finger</keyword>
<organism>
    <name type="scientific">Caenorhabditis elegans</name>
    <dbReference type="NCBI Taxonomy" id="6239"/>
    <lineage>
        <taxon>Eukaryota</taxon>
        <taxon>Metazoa</taxon>
        <taxon>Ecdysozoa</taxon>
        <taxon>Nematoda</taxon>
        <taxon>Chromadorea</taxon>
        <taxon>Rhabditida</taxon>
        <taxon>Rhabditina</taxon>
        <taxon>Rhabditomorpha</taxon>
        <taxon>Rhabditoidea</taxon>
        <taxon>Rhabditidae</taxon>
        <taxon>Peloderinae</taxon>
        <taxon>Caenorhabditis</taxon>
    </lineage>
</organism>
<feature type="chain" id="PRO_0000056138" description="E3 ubiquitin-protein ligase ubr-1">
    <location>
        <begin position="1"/>
        <end position="2058"/>
    </location>
</feature>
<feature type="transmembrane region" description="Helical" evidence="2">
    <location>
        <begin position="1695"/>
        <end position="1715"/>
    </location>
</feature>
<feature type="zinc finger region" description="UBR-type" evidence="3">
    <location>
        <begin position="93"/>
        <end position="164"/>
    </location>
</feature>
<feature type="zinc finger region" description="RING-type; atypical">
    <location>
        <begin position="1217"/>
        <end position="1335"/>
    </location>
</feature>
<feature type="region of interest" description="Disordered" evidence="4">
    <location>
        <begin position="1107"/>
        <end position="1175"/>
    </location>
</feature>
<feature type="region of interest" description="Disordered" evidence="4">
    <location>
        <begin position="1381"/>
        <end position="1416"/>
    </location>
</feature>
<feature type="region of interest" description="Disordered" evidence="4">
    <location>
        <begin position="1475"/>
        <end position="1499"/>
    </location>
</feature>
<feature type="compositionally biased region" description="Low complexity" evidence="4">
    <location>
        <begin position="1108"/>
        <end position="1119"/>
    </location>
</feature>
<feature type="compositionally biased region" description="Basic and acidic residues" evidence="4">
    <location>
        <begin position="1123"/>
        <end position="1138"/>
    </location>
</feature>
<feature type="compositionally biased region" description="Basic and acidic residues" evidence="4">
    <location>
        <begin position="1153"/>
        <end position="1175"/>
    </location>
</feature>
<feature type="compositionally biased region" description="Basic residues" evidence="4">
    <location>
        <begin position="1388"/>
        <end position="1397"/>
    </location>
</feature>
<feature type="compositionally biased region" description="Basic and acidic residues" evidence="4">
    <location>
        <begin position="1398"/>
        <end position="1413"/>
    </location>
</feature>
<feature type="compositionally biased region" description="Polar residues" evidence="4">
    <location>
        <begin position="1486"/>
        <end position="1495"/>
    </location>
</feature>
<feature type="mutagenesis site" description="In hp820; animals are viable, but display defective locomotion that progressively develops from the late larval stage into adulthood. Animals are capable of backwards locomotion or 'reversals' movements, but exhibit limited body flexing, with decreased body curvature during reversals, increased duration of reversals and a reduced frequency of reversal initiation compared to wild-type. Reduced bending is due to a defective activation pattern of A class motor neurons, whereby the posterior clusters of A class motor neurons DA7, VA10 and VA11, that innervate body wall muscles to execute reversals, are activated at the same time, which is in contrast to wild-type. Animals also display morphological and synaptic activity defects in AVA and AVE interneurons. Increases glutamate levels which is likely through increased got-1.2 activity. Defective reversals movement phenotype and increased glutamate levels are rescued in the got-1.2 hp731 mutant." evidence="6">
    <location>
        <begin position="18"/>
        <end position="25"/>
    </location>
</feature>
<feature type="mutagenesis site" description="In hp821; animals are viable, but display defective locomotion that progressively develops from the late larval stage into adulthood. Animals are capable of backwards locomotion or 'reversals' movements, but exhibit limited body flexing, with decreased body curvature during reversals, increased duration of reversals and a reduced frequency of reversal initiation compared to wild-type. Reduced bending is due to a defective activation pattern of A class motor neurons, whereby the posterior clusters of A class motor neurons DA7, VA10 and VA11, that innervate body wall muscles to execute reversals, are activated at the same time, which is in contrast to wild-type. Animals also display morphological and synaptic activity defects in AVA and AVE interneurons. Increases glutamate levels which is likely through increased got-1.2 activity. Defective reversals movement phenotype and increased glutamate levels are rescued in the got-1.2 hp731 mutant." evidence="6">
    <location>
        <begin position="34"/>
        <end position="2058"/>
    </location>
</feature>
<feature type="mutagenesis site" description="In tm5996; increases lin-28 protein levels 30 hours post feeding. Enhances the excessive seam cell proliferation phenotype and enhances the delay in temporal cell fate patterning of seam cells during the progression of larval development of the ain-1 ku322 mutant." evidence="5">
    <location>
        <begin position="136"/>
        <end position="163"/>
    </location>
</feature>
<feature type="mutagenesis site" description="In hp684; animals are viable, but display defective locomotion that progressively develops from the late larval stage into adulthood. Animals are capable of backwards locomotion or 'reversals' movements, but exhibit limited body flexing, with decreased body curvature during reversals, increased duration of reversals and a reduced frequency of reversal initiation compared to wild-type. Reduced bending is due to a defective activation pattern of A class motor neurons, whereby the posterior clusters of A class motor neurons DA7, VA10 and VA11, that innervate body wall muscles to execute reversals, are activated at the same time, which is in contrast to wild-type. Animals also display morphological and synaptic activity defects in AVA and AVE interneurons. Increases glutamate levels which is likely through increased got-1.2 activity. Defective reversals movement phenotype and increased glutamate levels are rescued in the got-1.2 hp731 mutant." evidence="6">
    <location>
        <begin position="1864"/>
        <end position="2058"/>
    </location>
</feature>
<accession>P91133</accession>
<protein>
    <recommendedName>
        <fullName>E3 ubiquitin-protein ligase ubr-1</fullName>
        <ecNumber>2.3.2.27</ecNumber>
    </recommendedName>
    <alternativeName>
        <fullName>N-recognin-1</fullName>
    </alternativeName>
    <alternativeName>
        <fullName>RING-type E3 ubiquitin transferase ubr-1</fullName>
    </alternativeName>
    <alternativeName>
        <fullName>Ubiquitin-protein ligase E3-alpha</fullName>
    </alternativeName>
</protein>
<reference key="1">
    <citation type="journal article" date="1998" name="Science">
        <title>Genome sequence of the nematode C. elegans: a platform for investigating biology.</title>
        <authorList>
            <consortium name="The C. elegans sequencing consortium"/>
        </authorList>
    </citation>
    <scope>NUCLEOTIDE SEQUENCE [LARGE SCALE GENOMIC DNA]</scope>
    <source>
        <strain>Bristol N2</strain>
    </source>
</reference>
<reference key="2">
    <citation type="journal article" date="2004" name="Dev. Biol.">
        <title>Characterization of C. elegans RING finger protein 1, a binding partner of ubiquitin-conjugating enzyme 1.</title>
        <authorList>
            <person name="Crowe E."/>
            <person name="Candido E.P.M."/>
        </authorList>
    </citation>
    <scope>INTERACTION WITH UBC-1</scope>
</reference>
<reference key="3">
    <citation type="journal article" date="2017" name="Dev. Cell">
        <title>Coupled Caspase and N-End Rule Ligase Activities Allow Recognition and Degradation of Pluripotency Factor LIN-28 during Non-Apoptotic Development.</title>
        <authorList>
            <person name="Weaver B.P."/>
            <person name="Weaver Y.M."/>
            <person name="Mitani S."/>
            <person name="Han M."/>
        </authorList>
    </citation>
    <scope>FUNCTION</scope>
    <scope>IDENTIFICATION IN COMPLEX WITH CED-3 AND ATE-1</scope>
    <scope>DISRUPTION PHENOTYPE</scope>
    <scope>MUTAGENESIS OF 136-MET--GLU-163</scope>
</reference>
<reference key="4">
    <citation type="journal article" date="2018" name="PLoS Genet.">
        <title>The UBR-1 ubiquitin ligase regulates glutamate metabolism to generate coordinated motor pattern in Caenorhabditis elegans.</title>
        <authorList>
            <person name="Chitturi J."/>
            <person name="Hung W."/>
            <person name="Rahman A.M.A."/>
            <person name="Wu M."/>
            <person name="Lim M.A."/>
            <person name="Calarco J."/>
            <person name="Baran R."/>
            <person name="Huang X."/>
            <person name="Dennis J.W."/>
            <person name="Zhen M."/>
        </authorList>
    </citation>
    <scope>FUNCTION</scope>
    <scope>TISSUE SPECIFICITY</scope>
    <scope>MUTAGENESIS OF 18-ARG--TRP-25; 821-GLU--PHE-2058 AND 1864-GLN--PHE-2058</scope>
</reference>
<evidence type="ECO:0000250" key="1">
    <source>
        <dbReference type="UniProtKB" id="Q8IWV7"/>
    </source>
</evidence>
<evidence type="ECO:0000255" key="2"/>
<evidence type="ECO:0000255" key="3">
    <source>
        <dbReference type="PROSITE-ProRule" id="PRU00508"/>
    </source>
</evidence>
<evidence type="ECO:0000256" key="4">
    <source>
        <dbReference type="SAM" id="MobiDB-lite"/>
    </source>
</evidence>
<evidence type="ECO:0000269" key="5">
    <source>
    </source>
</evidence>
<evidence type="ECO:0000269" key="6">
    <source>
    </source>
</evidence>
<evidence type="ECO:0000305" key="7"/>
<evidence type="ECO:0000305" key="8">
    <source>
    </source>
</evidence>
<evidence type="ECO:0000312" key="9">
    <source>
        <dbReference type="WormBase" id="C32E8.11"/>
    </source>
</evidence>
<proteinExistence type="evidence at protein level"/>
<comment type="function">
    <text evidence="1 5 6">E3 ubiquitin-protein ligase which is a component of the N-end rule pathway (By similarity). Recognizes and binds to proteins bearing specific N-terminal residues that are destabilizing according to the N-end rule, leading to their ubiquitination and subsequent degradation (By similarity). In complex with ced-3, required for the ced-3-mediated cleavage and subsequent degradation of the heterochronic protein lin-28 to regulate seam cell fate patterning during larval development (PubMed:28602583). Negatively regulates glutamate metabolism through the aspartate aminotransferase got-1.2 (PubMed:29649217). Modulation of glutamate levels most likely controls locomotory behavior, in particular backwards locomotion or 'reversals' (PubMed:29649217).</text>
</comment>
<comment type="catalytic activity">
    <reaction>
        <text>S-ubiquitinyl-[E2 ubiquitin-conjugating enzyme]-L-cysteine + [acceptor protein]-L-lysine = [E2 ubiquitin-conjugating enzyme]-L-cysteine + N(6)-ubiquitinyl-[acceptor protein]-L-lysine.</text>
        <dbReference type="EC" id="2.3.2.27"/>
    </reaction>
</comment>
<comment type="pathway">
    <text>Protein modification; protein ubiquitination.</text>
</comment>
<comment type="subunit">
    <text evidence="5 8">Interacts with ubc-1 (Probable). Component of a complex containing at least ced-3, ubr-1 and possibly ate-1 (PubMed:28602583). Within complex interacts with ced-3 (via the p17 subunit); this interaction is required for the ced-3-mediated cleavage and subsequent degradation of the heterochronic protein lin-28 (PubMed:28602583).</text>
</comment>
<comment type="subcellular location">
    <subcellularLocation>
        <location evidence="7">Membrane</location>
        <topology evidence="7">Single-pass membrane protein</topology>
    </subcellularLocation>
</comment>
<comment type="tissue specificity">
    <text evidence="6">Expressed in pharyngeal muscles, body wall muscles and a subset of neurons throughout postembryonic development (PubMed:29649217). Prominently expressed in premotor interneurons, but not expressed in ventral cord motor neurons (PubMed:29649217). Weakly expressed in hypodermal seam cells (PubMed:29649217).</text>
</comment>
<comment type="domain">
    <text>The RING-H2 zinc finger is an atypical RING finger with a His ligand in place of the fourth Cys of the classical motif.</text>
</comment>
<comment type="disruption phenotype">
    <text evidence="5">RNAi-mediated knockdown enhances the excessive seam cell proliferation phenotype of the ain-1 ku322 mutant.</text>
</comment>
<comment type="similarity">
    <text evidence="7">Belongs to the E3 ubiquitin-protein ligase UBR1-like family.</text>
</comment>
<name>UBR1_CAEEL</name>